<proteinExistence type="inferred from homology"/>
<feature type="signal peptide" evidence="1">
    <location>
        <begin position="1"/>
        <end position="23"/>
    </location>
</feature>
<feature type="chain" id="PRO_5000459384" description="UPF0312 protein PFLU_5725">
    <location>
        <begin position="24"/>
        <end position="192"/>
    </location>
</feature>
<accession>C3K3H1</accession>
<name>Y5725_PSEFS</name>
<sequence length="192" mass="20711">MLKKTLAALAIGTALLSAGQVMAADYKIDKEGQHAFIDWKISHLGYSYIHGTFKDWDGTFSWDAAKPETSKIAVDVKTASLWSNHAERDKHIASKDFLDVAKFADAKFVSTAVKSTGEKTADVTGDLTFHGVTKPVTFKATFNGEGKDPWGGERAGFNAKTTVNLNDFGIKGPGPSSQTVDLDISLEGVKQK</sequence>
<evidence type="ECO:0000255" key="1">
    <source>
        <dbReference type="HAMAP-Rule" id="MF_00780"/>
    </source>
</evidence>
<comment type="subcellular location">
    <subcellularLocation>
        <location evidence="1">Periplasm</location>
    </subcellularLocation>
</comment>
<comment type="similarity">
    <text evidence="1">Belongs to the UPF0312 family. Type 1 subfamily.</text>
</comment>
<keyword id="KW-0574">Periplasm</keyword>
<keyword id="KW-0732">Signal</keyword>
<reference key="1">
    <citation type="journal article" date="2009" name="Genome Biol.">
        <title>Genomic and genetic analyses of diversity and plant interactions of Pseudomonas fluorescens.</title>
        <authorList>
            <person name="Silby M.W."/>
            <person name="Cerdeno-Tarraga A.M."/>
            <person name="Vernikos G.S."/>
            <person name="Giddens S.R."/>
            <person name="Jackson R.W."/>
            <person name="Preston G.M."/>
            <person name="Zhang X.-X."/>
            <person name="Moon C.D."/>
            <person name="Gehrig S.M."/>
            <person name="Godfrey S.A.C."/>
            <person name="Knight C.G."/>
            <person name="Malone J.G."/>
            <person name="Robinson Z."/>
            <person name="Spiers A.J."/>
            <person name="Harris S."/>
            <person name="Challis G.L."/>
            <person name="Yaxley A.M."/>
            <person name="Harris D."/>
            <person name="Seeger K."/>
            <person name="Murphy L."/>
            <person name="Rutter S."/>
            <person name="Squares R."/>
            <person name="Quail M.A."/>
            <person name="Saunders E."/>
            <person name="Mavromatis K."/>
            <person name="Brettin T.S."/>
            <person name="Bentley S.D."/>
            <person name="Hothersall J."/>
            <person name="Stephens E."/>
            <person name="Thomas C.M."/>
            <person name="Parkhill J."/>
            <person name="Levy S.B."/>
            <person name="Rainey P.B."/>
            <person name="Thomson N.R."/>
        </authorList>
    </citation>
    <scope>NUCLEOTIDE SEQUENCE [LARGE SCALE GENOMIC DNA]</scope>
    <source>
        <strain>SBW25</strain>
    </source>
</reference>
<protein>
    <recommendedName>
        <fullName evidence="1">UPF0312 protein PFLU_5725</fullName>
    </recommendedName>
</protein>
<gene>
    <name type="ordered locus">PFLU_5725</name>
</gene>
<organism>
    <name type="scientific">Pseudomonas fluorescens (strain SBW25)</name>
    <dbReference type="NCBI Taxonomy" id="216595"/>
    <lineage>
        <taxon>Bacteria</taxon>
        <taxon>Pseudomonadati</taxon>
        <taxon>Pseudomonadota</taxon>
        <taxon>Gammaproteobacteria</taxon>
        <taxon>Pseudomonadales</taxon>
        <taxon>Pseudomonadaceae</taxon>
        <taxon>Pseudomonas</taxon>
    </lineage>
</organism>
<dbReference type="EMBL" id="AM181176">
    <property type="protein sequence ID" value="CAY53084.1"/>
    <property type="molecule type" value="Genomic_DNA"/>
</dbReference>
<dbReference type="RefSeq" id="WP_015886312.1">
    <property type="nucleotide sequence ID" value="NC_012660.1"/>
</dbReference>
<dbReference type="SMR" id="C3K3H1"/>
<dbReference type="PATRIC" id="fig|216595.4.peg.5848"/>
<dbReference type="eggNOG" id="COG2353">
    <property type="taxonomic scope" value="Bacteria"/>
</dbReference>
<dbReference type="HOGENOM" id="CLU_071003_1_2_6"/>
<dbReference type="OrthoDB" id="9811006at2"/>
<dbReference type="GO" id="GO:0042597">
    <property type="term" value="C:periplasmic space"/>
    <property type="evidence" value="ECO:0007669"/>
    <property type="project" value="UniProtKB-SubCell"/>
</dbReference>
<dbReference type="Gene3D" id="2.40.128.110">
    <property type="entry name" value="Lipid/polyisoprenoid-binding, YceI-like"/>
    <property type="match status" value="1"/>
</dbReference>
<dbReference type="HAMAP" id="MF_00780">
    <property type="entry name" value="UPF0312"/>
    <property type="match status" value="1"/>
</dbReference>
<dbReference type="InterPro" id="IPR007372">
    <property type="entry name" value="Lipid/polyisoprenoid-bd_YceI"/>
</dbReference>
<dbReference type="InterPro" id="IPR036761">
    <property type="entry name" value="TTHA0802/YceI-like_sf"/>
</dbReference>
<dbReference type="InterPro" id="IPR023480">
    <property type="entry name" value="UPF0312/YceI"/>
</dbReference>
<dbReference type="NCBIfam" id="NF002994">
    <property type="entry name" value="PRK03757.1"/>
    <property type="match status" value="1"/>
</dbReference>
<dbReference type="PANTHER" id="PTHR34406">
    <property type="entry name" value="PROTEIN YCEI"/>
    <property type="match status" value="1"/>
</dbReference>
<dbReference type="PANTHER" id="PTHR34406:SF1">
    <property type="entry name" value="PROTEIN YCEI"/>
    <property type="match status" value="1"/>
</dbReference>
<dbReference type="Pfam" id="PF04264">
    <property type="entry name" value="YceI"/>
    <property type="match status" value="1"/>
</dbReference>
<dbReference type="SMART" id="SM00867">
    <property type="entry name" value="YceI"/>
    <property type="match status" value="1"/>
</dbReference>
<dbReference type="SUPFAM" id="SSF101874">
    <property type="entry name" value="YceI-like"/>
    <property type="match status" value="1"/>
</dbReference>